<name>UVRC_ECOLI</name>
<sequence>MSDQFDAKAFLKTVTSQPGVYRMYDAGGTVIYVGKAKDLKKRLSSYFRSNLASRKTEALVAQIQQIDVTVTHTETEALLLEHNYIKLYQPRYNVLLRDDKSYPFIFLSGDTHPRLAMHRGAKHAKGEYFGPFPNGYAVRETLALLQKIFPIRQCENSVYRNRSRPCLQYQIGRCLGPCVEGLVSEEEYAQQVEYVRLFLSGKDDQVLTQLISRMETASQNLEFEEAARIRDQIQAVRRVTEKQFVSNTGDDLDVIGVAFDAGMACVHVLFIRQGKVLGSRSYFPKVPGGTELSEVVETFVGQFYLQGSQMRTLPGEILLDFNLSDKTLLADSLSELAGRKINVQTKPRGDRARYLKLARTNAATALTSKLSQQSTVHQRLTALASVLKLPEVKRMECFDISHTMGEQTVASCVVFDANGPLRAEYRRYNITGITPGDDYAAMNQVLRRRYGKAIDDSKIPDVILIDGGKGQLAQAKNVFAELDVSWDKNHPLLLGVAKGADRKAGLETLFFEPEGEGFSLPPDSPALHVIQHIRDESHDHAIGGHRKKRAKVKNTSSLETIEGVGPKRRQMLLKYMGGLQGLRNASVEEIAKVPGISQGLAEKIFWSLKH</sequence>
<keyword id="KW-0002">3D-structure</keyword>
<keyword id="KW-0963">Cytoplasm</keyword>
<keyword id="KW-0227">DNA damage</keyword>
<keyword id="KW-0228">DNA excision</keyword>
<keyword id="KW-0234">DNA repair</keyword>
<keyword id="KW-0267">Excision nuclease</keyword>
<keyword id="KW-1185">Reference proteome</keyword>
<keyword id="KW-0742">SOS response</keyword>
<protein>
    <recommendedName>
        <fullName>UvrABC system protein C</fullName>
        <shortName>Protein UvrC</shortName>
    </recommendedName>
    <alternativeName>
        <fullName>Excinuclease ABC subunit C</fullName>
    </alternativeName>
</protein>
<feature type="chain" id="PRO_0000138300" description="UvrABC system protein C">
    <location>
        <begin position="1"/>
        <end position="610"/>
    </location>
</feature>
<feature type="domain" description="GIY-YIG">
    <location>
        <begin position="16"/>
        <end position="94"/>
    </location>
</feature>
<feature type="domain" description="UVR">
    <location>
        <begin position="204"/>
        <end position="239"/>
    </location>
</feature>
<feature type="mutagenesis site" description="Defective in 3' incision but not in 5' incision." evidence="1">
    <original>R</original>
    <variation>A</variation>
    <location>
        <position position="42"/>
    </location>
</feature>
<feature type="mutagenesis site" description="Defective in 5' incision but not in 3' incision." evidence="2">
    <original>D</original>
    <variation>A</variation>
    <variation>N</variation>
    <location>
        <position position="399"/>
    </location>
</feature>
<feature type="mutagenesis site" description="Defective in 5' incision but not in 3' incision." evidence="2">
    <original>D</original>
    <variation>A</variation>
    <variation>N</variation>
    <location>
        <position position="438"/>
    </location>
</feature>
<feature type="mutagenesis site" description="Defective in 5' incision but not in 3' incision." evidence="2">
    <original>D</original>
    <variation>A</variation>
    <variation>N</variation>
    <location>
        <position position="466"/>
    </location>
</feature>
<feature type="mutagenesis site" description="Defective in 5' incision but not in 3' incision." evidence="2">
    <original>H</original>
    <variation>F</variation>
    <variation>Y</variation>
    <location>
        <position position="538"/>
    </location>
</feature>
<feature type="sequence conflict" description="In Ref. 1 and 2." evidence="3" ref="1 2">
    <original>E</original>
    <variation>K</variation>
    <location>
        <position position="291"/>
    </location>
</feature>
<feature type="helix" evidence="4">
    <location>
        <begin position="557"/>
        <end position="560"/>
    </location>
</feature>
<feature type="strand" evidence="4">
    <location>
        <begin position="565"/>
        <end position="567"/>
    </location>
</feature>
<feature type="helix" evidence="4">
    <location>
        <begin position="568"/>
        <end position="576"/>
    </location>
</feature>
<feature type="helix" evidence="4">
    <location>
        <begin position="579"/>
        <end position="584"/>
    </location>
</feature>
<feature type="helix" evidence="4">
    <location>
        <begin position="587"/>
        <end position="590"/>
    </location>
</feature>
<feature type="strand" evidence="4">
    <location>
        <begin position="593"/>
        <end position="595"/>
    </location>
</feature>
<feature type="helix" evidence="4">
    <location>
        <begin position="599"/>
        <end position="608"/>
    </location>
</feature>
<accession>P0A8G0</accession>
<accession>P07028</accession>
<accession>P76311</accession>
<accession>Q8XBD5</accession>
<reference key="1">
    <citation type="journal article" date="1984" name="Nucleic Acids Res.">
        <title>Sequences of the E. coli uvrC gene and protein.</title>
        <authorList>
            <person name="Sancar G.B."/>
            <person name="Sancar A."/>
            <person name="Rupp W.D."/>
        </authorList>
    </citation>
    <scope>NUCLEOTIDE SEQUENCE [GENOMIC DNA]</scope>
</reference>
<reference key="2">
    <citation type="journal article" date="1986" name="Nucleic Acids Res.">
        <title>Multiple control elements for the uvrC gene unit of Escherichia coli.</title>
        <authorList>
            <person name="Sharma S."/>
            <person name="Stark T.F."/>
            <person name="Beattie W.G."/>
            <person name="Moses R.E."/>
        </authorList>
    </citation>
    <scope>NUCLEOTIDE SEQUENCE [GENOMIC DNA]</scope>
</reference>
<reference key="3">
    <citation type="journal article" date="1996" name="DNA Res.">
        <title>A 460-kb DNA sequence of the Escherichia coli K-12 genome corresponding to the 40.1-50.0 min region on the linkage map.</title>
        <authorList>
            <person name="Itoh T."/>
            <person name="Aiba H."/>
            <person name="Baba T."/>
            <person name="Fujita K."/>
            <person name="Hayashi K."/>
            <person name="Inada T."/>
            <person name="Isono K."/>
            <person name="Kasai H."/>
            <person name="Kimura S."/>
            <person name="Kitakawa M."/>
            <person name="Kitagawa M."/>
            <person name="Makino K."/>
            <person name="Miki T."/>
            <person name="Mizobuchi K."/>
            <person name="Mori H."/>
            <person name="Mori T."/>
            <person name="Motomura K."/>
            <person name="Nakade S."/>
            <person name="Nakamura Y."/>
            <person name="Nashimoto H."/>
            <person name="Nishio Y."/>
            <person name="Oshima T."/>
            <person name="Saito N."/>
            <person name="Sampei G."/>
            <person name="Seki Y."/>
            <person name="Sivasundaram S."/>
            <person name="Tagami H."/>
            <person name="Takeda J."/>
            <person name="Takemoto K."/>
            <person name="Wada C."/>
            <person name="Yamamoto Y."/>
            <person name="Horiuchi T."/>
        </authorList>
    </citation>
    <scope>NUCLEOTIDE SEQUENCE [LARGE SCALE GENOMIC DNA]</scope>
    <source>
        <strain>K12 / W3110 / ATCC 27325 / DSM 5911</strain>
    </source>
</reference>
<reference key="4">
    <citation type="journal article" date="1997" name="Science">
        <title>The complete genome sequence of Escherichia coli K-12.</title>
        <authorList>
            <person name="Blattner F.R."/>
            <person name="Plunkett G. III"/>
            <person name="Bloch C.A."/>
            <person name="Perna N.T."/>
            <person name="Burland V."/>
            <person name="Riley M."/>
            <person name="Collado-Vides J."/>
            <person name="Glasner J.D."/>
            <person name="Rode C.K."/>
            <person name="Mayhew G.F."/>
            <person name="Gregor J."/>
            <person name="Davis N.W."/>
            <person name="Kirkpatrick H.A."/>
            <person name="Goeden M.A."/>
            <person name="Rose D.J."/>
            <person name="Mau B."/>
            <person name="Shao Y."/>
        </authorList>
    </citation>
    <scope>NUCLEOTIDE SEQUENCE [LARGE SCALE GENOMIC DNA]</scope>
    <source>
        <strain>K12 / MG1655 / ATCC 47076</strain>
    </source>
</reference>
<reference key="5">
    <citation type="journal article" date="2006" name="Mol. Syst. Biol.">
        <title>Highly accurate genome sequences of Escherichia coli K-12 strains MG1655 and W3110.</title>
        <authorList>
            <person name="Hayashi K."/>
            <person name="Morooka N."/>
            <person name="Yamamoto Y."/>
            <person name="Fujita K."/>
            <person name="Isono K."/>
            <person name="Choi S."/>
            <person name="Ohtsubo E."/>
            <person name="Baba T."/>
            <person name="Wanner B.L."/>
            <person name="Mori H."/>
            <person name="Horiuchi T."/>
        </authorList>
    </citation>
    <scope>NUCLEOTIDE SEQUENCE [LARGE SCALE GENOMIC DNA]</scope>
    <source>
        <strain>K12 / W3110 / ATCC 27325 / DSM 5911</strain>
    </source>
</reference>
<reference key="6">
    <citation type="journal article" date="1987" name="Nucleic Acids Res.">
        <title>Regulation of the Escherichia coli excision repair gene uvrC. Overlap between the uvrC structural gene and the region coding for a 24 kD protein.</title>
        <authorList>
            <person name="Moolenaar G.F."/>
            <person name="van Sluis C.A."/>
            <person name="Backendorf C."/>
            <person name="van de Putte P."/>
        </authorList>
    </citation>
    <scope>NUCLEOTIDE SEQUENCE [GENOMIC DNA] OF 1-28</scope>
</reference>
<reference key="7">
    <citation type="journal article" date="1986" name="J. Biol. Chem.">
        <title>Structure and expression of the gene locus encoding the phosphatidylglycerophosphate synthase of Escherichia coli.</title>
        <authorList>
            <person name="Gopalakrishnan A.S."/>
            <person name="Chen Y.-C."/>
            <person name="Temkin M."/>
            <person name="Dowhan W."/>
        </authorList>
    </citation>
    <scope>NUCLEOTIDE SEQUENCE [GENOMIC DNA] OF 604-610</scope>
</reference>
<reference key="8">
    <citation type="journal article" date="1992" name="J. Biol. Chem.">
        <title>Active site of (A)BC excinuclease. I. Evidence for 5' incision by UvrC through a catalytic site involving Asp399, Asp438, Asp466, and His538 residues.</title>
        <authorList>
            <person name="Lin J.-J."/>
            <person name="Sancar A."/>
        </authorList>
    </citation>
    <scope>FUNCTION</scope>
    <scope>MUTAGENESIS OF ASP-399; ASP-438; ASP-466 AND HIS-538</scope>
    <source>
        <strain>K12</strain>
    </source>
</reference>
<reference key="9">
    <citation type="journal article" date="1997" name="Electrophoresis">
        <title>Escherichia coli proteome analysis using the gene-protein database.</title>
        <authorList>
            <person name="VanBogelen R.A."/>
            <person name="Abshire K.Z."/>
            <person name="Moldover B."/>
            <person name="Olson E.R."/>
            <person name="Neidhardt F.C."/>
        </authorList>
    </citation>
    <scope>IDENTIFICATION BY 2D-GEL</scope>
</reference>
<reference key="10">
    <citation type="journal article" date="2000" name="J. Biol. Chem.">
        <title>Catalytic sites for 3' and 5' incision of Escherichia coli nucleotide excision repair are both located in UvrC.</title>
        <authorList>
            <person name="Verhoeven E.E."/>
            <person name="van Kesteren M."/>
            <person name="Moolenaar G.F."/>
            <person name="Visse R."/>
            <person name="Goosen N."/>
        </authorList>
    </citation>
    <scope>FUNCTION</scope>
    <scope>MUTAGENESIS OF ARG-42</scope>
</reference>
<organism>
    <name type="scientific">Escherichia coli (strain K12)</name>
    <dbReference type="NCBI Taxonomy" id="83333"/>
    <lineage>
        <taxon>Bacteria</taxon>
        <taxon>Pseudomonadati</taxon>
        <taxon>Pseudomonadota</taxon>
        <taxon>Gammaproteobacteria</taxon>
        <taxon>Enterobacterales</taxon>
        <taxon>Enterobacteriaceae</taxon>
        <taxon>Escherichia</taxon>
    </lineage>
</organism>
<proteinExistence type="evidence at protein level"/>
<evidence type="ECO:0000269" key="1">
    <source>
    </source>
</evidence>
<evidence type="ECO:0000269" key="2">
    <source>
    </source>
</evidence>
<evidence type="ECO:0000305" key="3"/>
<evidence type="ECO:0007829" key="4">
    <source>
        <dbReference type="PDB" id="1KFT"/>
    </source>
</evidence>
<comment type="function">
    <text evidence="1 2">The UvrABC repair system catalyzes the recognition and processing of DNA lesions. UvrC both incises the 5' and 3' sides of the lesion. The N-terminal half is responsible for the 3' incision and the C-terminal half is responsible for the 5' incision.</text>
</comment>
<comment type="subunit">
    <text>Interacts with UvrB in an incision complex.</text>
</comment>
<comment type="subcellular location">
    <subcellularLocation>
        <location>Cytoplasm</location>
    </subcellularLocation>
</comment>
<comment type="similarity">
    <text evidence="3">Belongs to the UvrC family.</text>
</comment>
<comment type="sequence caution" evidence="3">
    <conflict type="erroneous initiation">
        <sequence resource="EMBL-CDS" id="CAA27329"/>
    </conflict>
    <text>Truncated N-terminus.</text>
</comment>
<dbReference type="EMBL" id="X03691">
    <property type="protein sequence ID" value="CAA27329.1"/>
    <property type="status" value="ALT_INIT"/>
    <property type="molecule type" value="Genomic_DNA"/>
</dbReference>
<dbReference type="EMBL" id="U00096">
    <property type="protein sequence ID" value="AAC74980.2"/>
    <property type="molecule type" value="Genomic_DNA"/>
</dbReference>
<dbReference type="EMBL" id="AP009048">
    <property type="protein sequence ID" value="BAA15733.1"/>
    <property type="molecule type" value="Genomic_DNA"/>
</dbReference>
<dbReference type="EMBL" id="M24615">
    <property type="protein sequence ID" value="AAA24756.1"/>
    <property type="molecule type" value="Genomic_DNA"/>
</dbReference>
<dbReference type="EMBL" id="X05398">
    <property type="protein sequence ID" value="CAA28983.1"/>
    <property type="molecule type" value="Genomic_DNA"/>
</dbReference>
<dbReference type="EMBL" id="M12299">
    <property type="protein sequence ID" value="AAA98753.1"/>
    <property type="molecule type" value="Genomic_DNA"/>
</dbReference>
<dbReference type="PIR" id="F64954">
    <property type="entry name" value="BVECUC"/>
</dbReference>
<dbReference type="RefSeq" id="NP_416423.4">
    <property type="nucleotide sequence ID" value="NC_000913.3"/>
</dbReference>
<dbReference type="RefSeq" id="WP_001283421.1">
    <property type="nucleotide sequence ID" value="NZ_STEB01000026.1"/>
</dbReference>
<dbReference type="PDB" id="1KFT">
    <property type="method" value="NMR"/>
    <property type="chains" value="A=554-610"/>
</dbReference>
<dbReference type="PDBsum" id="1KFT"/>
<dbReference type="SMR" id="P0A8G0"/>
<dbReference type="BioGRID" id="4260379">
    <property type="interactions" value="107"/>
</dbReference>
<dbReference type="BioGRID" id="851535">
    <property type="interactions" value="1"/>
</dbReference>
<dbReference type="ComplexPortal" id="CPX-2153">
    <property type="entry name" value="UvrBC excinuclease repair complex"/>
</dbReference>
<dbReference type="DIP" id="DIP-47875N"/>
<dbReference type="FunCoup" id="P0A8G0">
    <property type="interactions" value="315"/>
</dbReference>
<dbReference type="IntAct" id="P0A8G0">
    <property type="interactions" value="47"/>
</dbReference>
<dbReference type="STRING" id="511145.b1913"/>
<dbReference type="jPOST" id="P0A8G0"/>
<dbReference type="PaxDb" id="511145-b1913"/>
<dbReference type="DNASU" id="947203"/>
<dbReference type="EnsemblBacteria" id="AAC74980">
    <property type="protein sequence ID" value="AAC74980"/>
    <property type="gene ID" value="b1913"/>
</dbReference>
<dbReference type="GeneID" id="93776218"/>
<dbReference type="GeneID" id="947203"/>
<dbReference type="KEGG" id="ecj:JW1898"/>
<dbReference type="KEGG" id="eco:b1913"/>
<dbReference type="KEGG" id="ecoc:C3026_10855"/>
<dbReference type="PATRIC" id="fig|1411691.4.peg.337"/>
<dbReference type="EchoBASE" id="EB1056"/>
<dbReference type="eggNOG" id="COG0322">
    <property type="taxonomic scope" value="Bacteria"/>
</dbReference>
<dbReference type="HOGENOM" id="CLU_014841_3_0_6"/>
<dbReference type="InParanoid" id="P0A8G0"/>
<dbReference type="OMA" id="HIECFDN"/>
<dbReference type="OrthoDB" id="9804933at2"/>
<dbReference type="PhylomeDB" id="P0A8G0"/>
<dbReference type="BioCyc" id="EcoCyc:EG11063-MONOMER"/>
<dbReference type="BioCyc" id="MetaCyc:EG11063-MONOMER"/>
<dbReference type="EvolutionaryTrace" id="P0A8G0"/>
<dbReference type="PRO" id="PR:P0A8G0"/>
<dbReference type="Proteomes" id="UP000000625">
    <property type="component" value="Chromosome"/>
</dbReference>
<dbReference type="GO" id="GO:0005737">
    <property type="term" value="C:cytoplasm"/>
    <property type="evidence" value="ECO:0007669"/>
    <property type="project" value="UniProtKB-SubCell"/>
</dbReference>
<dbReference type="GO" id="GO:0009380">
    <property type="term" value="C:excinuclease repair complex"/>
    <property type="evidence" value="ECO:0000314"/>
    <property type="project" value="UniProtKB"/>
</dbReference>
<dbReference type="GO" id="GO:0003677">
    <property type="term" value="F:DNA binding"/>
    <property type="evidence" value="ECO:0007669"/>
    <property type="project" value="UniProtKB-UniRule"/>
</dbReference>
<dbReference type="GO" id="GO:0009381">
    <property type="term" value="F:excinuclease ABC activity"/>
    <property type="evidence" value="ECO:0007669"/>
    <property type="project" value="UniProtKB-UniRule"/>
</dbReference>
<dbReference type="GO" id="GO:0006974">
    <property type="term" value="P:DNA damage response"/>
    <property type="evidence" value="ECO:0000318"/>
    <property type="project" value="GO_Central"/>
</dbReference>
<dbReference type="GO" id="GO:0006289">
    <property type="term" value="P:nucleotide-excision repair"/>
    <property type="evidence" value="ECO:0000314"/>
    <property type="project" value="ComplexPortal"/>
</dbReference>
<dbReference type="GO" id="GO:0009314">
    <property type="term" value="P:response to radiation"/>
    <property type="evidence" value="ECO:0000315"/>
    <property type="project" value="EcoCyc"/>
</dbReference>
<dbReference type="GO" id="GO:0009432">
    <property type="term" value="P:SOS response"/>
    <property type="evidence" value="ECO:0007669"/>
    <property type="project" value="UniProtKB-UniRule"/>
</dbReference>
<dbReference type="CDD" id="cd10434">
    <property type="entry name" value="GIY-YIG_UvrC_Cho"/>
    <property type="match status" value="1"/>
</dbReference>
<dbReference type="FunFam" id="1.10.150.20:FF:000005">
    <property type="entry name" value="UvrABC system protein C"/>
    <property type="match status" value="1"/>
</dbReference>
<dbReference type="FunFam" id="3.30.420.340:FF:000001">
    <property type="entry name" value="UvrABC system protein C"/>
    <property type="match status" value="1"/>
</dbReference>
<dbReference type="FunFam" id="3.40.1440.10:FF:000001">
    <property type="entry name" value="UvrABC system protein C"/>
    <property type="match status" value="1"/>
</dbReference>
<dbReference type="FunFam" id="4.10.860.10:FF:000002">
    <property type="entry name" value="UvrABC system protein C"/>
    <property type="match status" value="1"/>
</dbReference>
<dbReference type="Gene3D" id="1.10.150.20">
    <property type="entry name" value="5' to 3' exonuclease, C-terminal subdomain"/>
    <property type="match status" value="1"/>
</dbReference>
<dbReference type="Gene3D" id="3.40.1440.10">
    <property type="entry name" value="GIY-YIG endonuclease"/>
    <property type="match status" value="1"/>
</dbReference>
<dbReference type="Gene3D" id="4.10.860.10">
    <property type="entry name" value="UVR domain"/>
    <property type="match status" value="1"/>
</dbReference>
<dbReference type="Gene3D" id="3.30.420.340">
    <property type="entry name" value="UvrC, RNAse H endonuclease domain"/>
    <property type="match status" value="1"/>
</dbReference>
<dbReference type="HAMAP" id="MF_00203">
    <property type="entry name" value="UvrC"/>
    <property type="match status" value="1"/>
</dbReference>
<dbReference type="InterPro" id="IPR000305">
    <property type="entry name" value="GIY-YIG_endonuc"/>
</dbReference>
<dbReference type="InterPro" id="IPR035901">
    <property type="entry name" value="GIY-YIG_endonuc_sf"/>
</dbReference>
<dbReference type="InterPro" id="IPR047296">
    <property type="entry name" value="GIY-YIG_UvrC_Cho"/>
</dbReference>
<dbReference type="InterPro" id="IPR003583">
    <property type="entry name" value="Hlx-hairpin-Hlx_DNA-bd_motif"/>
</dbReference>
<dbReference type="InterPro" id="IPR010994">
    <property type="entry name" value="RuvA_2-like"/>
</dbReference>
<dbReference type="InterPro" id="IPR001943">
    <property type="entry name" value="UVR_dom"/>
</dbReference>
<dbReference type="InterPro" id="IPR036876">
    <property type="entry name" value="UVR_dom_sf"/>
</dbReference>
<dbReference type="InterPro" id="IPR050066">
    <property type="entry name" value="UvrABC_protein_C"/>
</dbReference>
<dbReference type="InterPro" id="IPR004791">
    <property type="entry name" value="UvrC"/>
</dbReference>
<dbReference type="InterPro" id="IPR001162">
    <property type="entry name" value="UvrC_RNase_H_dom"/>
</dbReference>
<dbReference type="InterPro" id="IPR038476">
    <property type="entry name" value="UvrC_RNase_H_dom_sf"/>
</dbReference>
<dbReference type="NCBIfam" id="NF001824">
    <property type="entry name" value="PRK00558.1-5"/>
    <property type="match status" value="1"/>
</dbReference>
<dbReference type="NCBIfam" id="TIGR00194">
    <property type="entry name" value="uvrC"/>
    <property type="match status" value="1"/>
</dbReference>
<dbReference type="PANTHER" id="PTHR30562:SF1">
    <property type="entry name" value="UVRABC SYSTEM PROTEIN C"/>
    <property type="match status" value="1"/>
</dbReference>
<dbReference type="PANTHER" id="PTHR30562">
    <property type="entry name" value="UVRC/OXIDOREDUCTASE"/>
    <property type="match status" value="1"/>
</dbReference>
<dbReference type="Pfam" id="PF01541">
    <property type="entry name" value="GIY-YIG"/>
    <property type="match status" value="1"/>
</dbReference>
<dbReference type="Pfam" id="PF14520">
    <property type="entry name" value="HHH_5"/>
    <property type="match status" value="1"/>
</dbReference>
<dbReference type="Pfam" id="PF02151">
    <property type="entry name" value="UVR"/>
    <property type="match status" value="1"/>
</dbReference>
<dbReference type="Pfam" id="PF22920">
    <property type="entry name" value="UvrC_RNaseH"/>
    <property type="match status" value="1"/>
</dbReference>
<dbReference type="Pfam" id="PF08459">
    <property type="entry name" value="UvrC_RNaseH_dom"/>
    <property type="match status" value="1"/>
</dbReference>
<dbReference type="SMART" id="SM00465">
    <property type="entry name" value="GIYc"/>
    <property type="match status" value="1"/>
</dbReference>
<dbReference type="SMART" id="SM00278">
    <property type="entry name" value="HhH1"/>
    <property type="match status" value="2"/>
</dbReference>
<dbReference type="SUPFAM" id="SSF46600">
    <property type="entry name" value="C-terminal UvrC-binding domain of UvrB"/>
    <property type="match status" value="1"/>
</dbReference>
<dbReference type="SUPFAM" id="SSF82771">
    <property type="entry name" value="GIY-YIG endonuclease"/>
    <property type="match status" value="1"/>
</dbReference>
<dbReference type="SUPFAM" id="SSF47781">
    <property type="entry name" value="RuvA domain 2-like"/>
    <property type="match status" value="1"/>
</dbReference>
<dbReference type="PROSITE" id="PS50164">
    <property type="entry name" value="GIY_YIG"/>
    <property type="match status" value="1"/>
</dbReference>
<dbReference type="PROSITE" id="PS50151">
    <property type="entry name" value="UVR"/>
    <property type="match status" value="1"/>
</dbReference>
<dbReference type="PROSITE" id="PS50165">
    <property type="entry name" value="UVRC"/>
    <property type="match status" value="1"/>
</dbReference>
<gene>
    <name type="primary">uvrC</name>
    <name type="ordered locus">b1913</name>
    <name type="ordered locus">JW1898</name>
</gene>